<proteinExistence type="inferred from homology"/>
<feature type="chain" id="PRO_1000060520" description="Chaperone protein HtpG">
    <location>
        <begin position="1"/>
        <end position="641"/>
    </location>
</feature>
<feature type="region of interest" description="A; substrate-binding" evidence="1">
    <location>
        <begin position="1"/>
        <end position="351"/>
    </location>
</feature>
<feature type="region of interest" description="B" evidence="1">
    <location>
        <begin position="352"/>
        <end position="568"/>
    </location>
</feature>
<feature type="region of interest" description="C" evidence="1">
    <location>
        <begin position="569"/>
        <end position="641"/>
    </location>
</feature>
<gene>
    <name evidence="1" type="primary">htpG</name>
    <name type="ordered locus">AHA_2490</name>
</gene>
<dbReference type="EMBL" id="CP000462">
    <property type="protein sequence ID" value="ABK38983.1"/>
    <property type="molecule type" value="Genomic_DNA"/>
</dbReference>
<dbReference type="RefSeq" id="WP_011706320.1">
    <property type="nucleotide sequence ID" value="NC_008570.1"/>
</dbReference>
<dbReference type="RefSeq" id="YP_857004.1">
    <property type="nucleotide sequence ID" value="NC_008570.1"/>
</dbReference>
<dbReference type="SMR" id="A0KL53"/>
<dbReference type="STRING" id="380703.AHA_2490"/>
<dbReference type="EnsemblBacteria" id="ABK38983">
    <property type="protein sequence ID" value="ABK38983"/>
    <property type="gene ID" value="AHA_2490"/>
</dbReference>
<dbReference type="GeneID" id="4490791"/>
<dbReference type="KEGG" id="aha:AHA_2490"/>
<dbReference type="PATRIC" id="fig|380703.7.peg.2489"/>
<dbReference type="eggNOG" id="COG0326">
    <property type="taxonomic scope" value="Bacteria"/>
</dbReference>
<dbReference type="HOGENOM" id="CLU_006684_3_0_6"/>
<dbReference type="OrthoDB" id="9802640at2"/>
<dbReference type="Proteomes" id="UP000000756">
    <property type="component" value="Chromosome"/>
</dbReference>
<dbReference type="GO" id="GO:0005737">
    <property type="term" value="C:cytoplasm"/>
    <property type="evidence" value="ECO:0007669"/>
    <property type="project" value="UniProtKB-SubCell"/>
</dbReference>
<dbReference type="GO" id="GO:0005524">
    <property type="term" value="F:ATP binding"/>
    <property type="evidence" value="ECO:0007669"/>
    <property type="project" value="UniProtKB-UniRule"/>
</dbReference>
<dbReference type="GO" id="GO:0016887">
    <property type="term" value="F:ATP hydrolysis activity"/>
    <property type="evidence" value="ECO:0007669"/>
    <property type="project" value="InterPro"/>
</dbReference>
<dbReference type="GO" id="GO:0140662">
    <property type="term" value="F:ATP-dependent protein folding chaperone"/>
    <property type="evidence" value="ECO:0007669"/>
    <property type="project" value="InterPro"/>
</dbReference>
<dbReference type="GO" id="GO:0051082">
    <property type="term" value="F:unfolded protein binding"/>
    <property type="evidence" value="ECO:0007669"/>
    <property type="project" value="UniProtKB-UniRule"/>
</dbReference>
<dbReference type="CDD" id="cd16927">
    <property type="entry name" value="HATPase_Hsp90-like"/>
    <property type="match status" value="1"/>
</dbReference>
<dbReference type="FunFam" id="3.30.230.80:FF:000002">
    <property type="entry name" value="Molecular chaperone HtpG"/>
    <property type="match status" value="1"/>
</dbReference>
<dbReference type="FunFam" id="3.30.565.10:FF:000009">
    <property type="entry name" value="Molecular chaperone HtpG"/>
    <property type="match status" value="1"/>
</dbReference>
<dbReference type="FunFam" id="3.40.50.11260:FF:000002">
    <property type="entry name" value="Molecular chaperone HtpG"/>
    <property type="match status" value="1"/>
</dbReference>
<dbReference type="Gene3D" id="3.30.230.80">
    <property type="match status" value="1"/>
</dbReference>
<dbReference type="Gene3D" id="3.40.50.11260">
    <property type="match status" value="1"/>
</dbReference>
<dbReference type="Gene3D" id="1.20.120.790">
    <property type="entry name" value="Heat shock protein 90, C-terminal domain"/>
    <property type="match status" value="1"/>
</dbReference>
<dbReference type="Gene3D" id="3.30.565.10">
    <property type="entry name" value="Histidine kinase-like ATPase, C-terminal domain"/>
    <property type="match status" value="1"/>
</dbReference>
<dbReference type="HAMAP" id="MF_00505">
    <property type="entry name" value="HSP90"/>
    <property type="match status" value="1"/>
</dbReference>
<dbReference type="InterPro" id="IPR036890">
    <property type="entry name" value="HATPase_C_sf"/>
</dbReference>
<dbReference type="InterPro" id="IPR019805">
    <property type="entry name" value="Heat_shock_protein_90_CS"/>
</dbReference>
<dbReference type="InterPro" id="IPR037196">
    <property type="entry name" value="HSP90_C"/>
</dbReference>
<dbReference type="InterPro" id="IPR001404">
    <property type="entry name" value="Hsp90_fam"/>
</dbReference>
<dbReference type="InterPro" id="IPR020575">
    <property type="entry name" value="Hsp90_N"/>
</dbReference>
<dbReference type="InterPro" id="IPR020568">
    <property type="entry name" value="Ribosomal_Su5_D2-typ_SF"/>
</dbReference>
<dbReference type="NCBIfam" id="NF003555">
    <property type="entry name" value="PRK05218.1"/>
    <property type="match status" value="1"/>
</dbReference>
<dbReference type="PANTHER" id="PTHR11528">
    <property type="entry name" value="HEAT SHOCK PROTEIN 90 FAMILY MEMBER"/>
    <property type="match status" value="1"/>
</dbReference>
<dbReference type="Pfam" id="PF13589">
    <property type="entry name" value="HATPase_c_3"/>
    <property type="match status" value="1"/>
</dbReference>
<dbReference type="Pfam" id="PF00183">
    <property type="entry name" value="HSP90"/>
    <property type="match status" value="1"/>
</dbReference>
<dbReference type="PIRSF" id="PIRSF002583">
    <property type="entry name" value="Hsp90"/>
    <property type="match status" value="1"/>
</dbReference>
<dbReference type="PRINTS" id="PR00775">
    <property type="entry name" value="HEATSHOCK90"/>
</dbReference>
<dbReference type="SMART" id="SM00387">
    <property type="entry name" value="HATPase_c"/>
    <property type="match status" value="1"/>
</dbReference>
<dbReference type="SUPFAM" id="SSF55874">
    <property type="entry name" value="ATPase domain of HSP90 chaperone/DNA topoisomerase II/histidine kinase"/>
    <property type="match status" value="1"/>
</dbReference>
<dbReference type="SUPFAM" id="SSF110942">
    <property type="entry name" value="HSP90 C-terminal domain"/>
    <property type="match status" value="1"/>
</dbReference>
<dbReference type="SUPFAM" id="SSF54211">
    <property type="entry name" value="Ribosomal protein S5 domain 2-like"/>
    <property type="match status" value="1"/>
</dbReference>
<dbReference type="PROSITE" id="PS00298">
    <property type="entry name" value="HSP90"/>
    <property type="match status" value="1"/>
</dbReference>
<sequence length="641" mass="71860">MTQSVHAETHGFQTEVKQLLSLMAHSLYSNKEVFLRELISNASDAADKLRFKALSDASLFENDGQLRVRLVVDKENRTLTISDNGIGMTRDQVIEHLGTIAKSGTAEFFKNLSGDQGRDSQLIGQFGVGFYSAFIVADKVTVVSRAAGTAPEQGVQWESEGEGSFTVADVTKAGRGTDVILHLRAEEDEFLDDWRLRSVVSKYSDHISVPVEMYKEGTPDSVGEGEEDGETIVGTPGEWEQVNRATALWTRNPKEIKDEEYQEFYKHVAHDFEDPLLWGHNRVEGAQEYTSLLYVPARAPFDLYNRDQKHGLKLYVQRVFIMDDAEQFMPAYLRFVKGVLDSNDLPLNVSREILQDNKVTVSLRKACSKRVLTMLAKLAKDDAEKYAKFWSEFGNVLKEGPAEDYANREEIAKLLRFASTAGEGEAQTVSLEDYVGRMKEGQQKIYYITADSYAAAKNSPHLEIFRKKGVEVLLMWERVDEWLMSHLTEFDGKQLVSVTRGELDLGDLEDEASKQAQEEAEKANAGLVERVKQSLGEAVKEVRVTHRLTDSPSCIVTDAHGMSTQMIKLMRAAGQPVPEQKYILELNPDHALVKKLGAIEDEALFGEWVTLLHEQAQLAEQGGLNDPASFVSRINRLLLQA</sequence>
<keyword id="KW-0067">ATP-binding</keyword>
<keyword id="KW-0143">Chaperone</keyword>
<keyword id="KW-0963">Cytoplasm</keyword>
<keyword id="KW-0547">Nucleotide-binding</keyword>
<keyword id="KW-1185">Reference proteome</keyword>
<keyword id="KW-0346">Stress response</keyword>
<protein>
    <recommendedName>
        <fullName evidence="1">Chaperone protein HtpG</fullName>
    </recommendedName>
    <alternativeName>
        <fullName evidence="1">Heat shock protein HtpG</fullName>
    </alternativeName>
    <alternativeName>
        <fullName evidence="1">High temperature protein G</fullName>
    </alternativeName>
</protein>
<reference key="1">
    <citation type="journal article" date="2006" name="J. Bacteriol.">
        <title>Genome sequence of Aeromonas hydrophila ATCC 7966T: jack of all trades.</title>
        <authorList>
            <person name="Seshadri R."/>
            <person name="Joseph S.W."/>
            <person name="Chopra A.K."/>
            <person name="Sha J."/>
            <person name="Shaw J."/>
            <person name="Graf J."/>
            <person name="Haft D.H."/>
            <person name="Wu M."/>
            <person name="Ren Q."/>
            <person name="Rosovitz M.J."/>
            <person name="Madupu R."/>
            <person name="Tallon L."/>
            <person name="Kim M."/>
            <person name="Jin S."/>
            <person name="Vuong H."/>
            <person name="Stine O.C."/>
            <person name="Ali A."/>
            <person name="Horneman A.J."/>
            <person name="Heidelberg J.F."/>
        </authorList>
    </citation>
    <scope>NUCLEOTIDE SEQUENCE [LARGE SCALE GENOMIC DNA]</scope>
    <source>
        <strain>ATCC 7966 / DSM 30187 / BCRC 13018 / CCUG 14551 / JCM 1027 / KCTC 2358 / NCIMB 9240 / NCTC 8049</strain>
    </source>
</reference>
<organism>
    <name type="scientific">Aeromonas hydrophila subsp. hydrophila (strain ATCC 7966 / DSM 30187 / BCRC 13018 / CCUG 14551 / JCM 1027 / KCTC 2358 / NCIMB 9240 / NCTC 8049)</name>
    <dbReference type="NCBI Taxonomy" id="380703"/>
    <lineage>
        <taxon>Bacteria</taxon>
        <taxon>Pseudomonadati</taxon>
        <taxon>Pseudomonadota</taxon>
        <taxon>Gammaproteobacteria</taxon>
        <taxon>Aeromonadales</taxon>
        <taxon>Aeromonadaceae</taxon>
        <taxon>Aeromonas</taxon>
    </lineage>
</organism>
<name>HTPG_AERHH</name>
<comment type="function">
    <text evidence="1">Molecular chaperone. Has ATPase activity.</text>
</comment>
<comment type="subunit">
    <text evidence="1">Homodimer.</text>
</comment>
<comment type="subcellular location">
    <subcellularLocation>
        <location evidence="1">Cytoplasm</location>
    </subcellularLocation>
</comment>
<comment type="similarity">
    <text evidence="1">Belongs to the heat shock protein 90 family.</text>
</comment>
<accession>A0KL53</accession>
<evidence type="ECO:0000255" key="1">
    <source>
        <dbReference type="HAMAP-Rule" id="MF_00505"/>
    </source>
</evidence>